<evidence type="ECO:0000250" key="1">
    <source>
        <dbReference type="UniProtKB" id="P03901"/>
    </source>
</evidence>
<evidence type="ECO:0000250" key="2">
    <source>
        <dbReference type="UniProtKB" id="P03902"/>
    </source>
</evidence>
<evidence type="ECO:0000255" key="3"/>
<evidence type="ECO:0000305" key="4"/>
<keyword id="KW-0249">Electron transport</keyword>
<keyword id="KW-0472">Membrane</keyword>
<keyword id="KW-0496">Mitochondrion</keyword>
<keyword id="KW-0999">Mitochondrion inner membrane</keyword>
<keyword id="KW-0520">NAD</keyword>
<keyword id="KW-0679">Respiratory chain</keyword>
<keyword id="KW-1278">Translocase</keyword>
<keyword id="KW-0812">Transmembrane</keyword>
<keyword id="KW-1133">Transmembrane helix</keyword>
<keyword id="KW-0813">Transport</keyword>
<keyword id="KW-0830">Ubiquinone</keyword>
<comment type="function">
    <text evidence="1">Core subunit of the mitochondrial membrane respiratory chain NADH dehydrogenase (Complex I) which catalyzes electron transfer from NADH through the respiratory chain, using ubiquinone as an electron acceptor. Part of the enzyme membrane arm which is embedded in the lipid bilayer and involved in proton translocation.</text>
</comment>
<comment type="catalytic activity">
    <reaction evidence="1">
        <text>a ubiquinone + NADH + 5 H(+)(in) = a ubiquinol + NAD(+) + 4 H(+)(out)</text>
        <dbReference type="Rhea" id="RHEA:29091"/>
        <dbReference type="Rhea" id="RHEA-COMP:9565"/>
        <dbReference type="Rhea" id="RHEA-COMP:9566"/>
        <dbReference type="ChEBI" id="CHEBI:15378"/>
        <dbReference type="ChEBI" id="CHEBI:16389"/>
        <dbReference type="ChEBI" id="CHEBI:17976"/>
        <dbReference type="ChEBI" id="CHEBI:57540"/>
        <dbReference type="ChEBI" id="CHEBI:57945"/>
        <dbReference type="EC" id="7.1.1.2"/>
    </reaction>
    <physiologicalReaction direction="left-to-right" evidence="1">
        <dbReference type="Rhea" id="RHEA:29092"/>
    </physiologicalReaction>
</comment>
<comment type="subunit">
    <text evidence="2">Core subunit of respiratory chain NADH dehydrogenase (Complex I) which is composed of 45 different subunits.</text>
</comment>
<comment type="subcellular location">
    <subcellularLocation>
        <location evidence="2">Mitochondrion inner membrane</location>
        <topology evidence="3">Multi-pass membrane protein</topology>
    </subcellularLocation>
</comment>
<comment type="similarity">
    <text evidence="4">Belongs to the complex I subunit 4L family.</text>
</comment>
<dbReference type="EC" id="7.1.1.2"/>
<dbReference type="EMBL" id="AY598538">
    <property type="protein sequence ID" value="AAU00484.1"/>
    <property type="molecule type" value="Genomic_DNA"/>
</dbReference>
<dbReference type="SMR" id="Q3L6V0"/>
<dbReference type="GO" id="GO:0005743">
    <property type="term" value="C:mitochondrial inner membrane"/>
    <property type="evidence" value="ECO:0000250"/>
    <property type="project" value="UniProtKB"/>
</dbReference>
<dbReference type="GO" id="GO:0045271">
    <property type="term" value="C:respiratory chain complex I"/>
    <property type="evidence" value="ECO:0000250"/>
    <property type="project" value="UniProtKB"/>
</dbReference>
<dbReference type="GO" id="GO:0008137">
    <property type="term" value="F:NADH dehydrogenase (ubiquinone) activity"/>
    <property type="evidence" value="ECO:0000250"/>
    <property type="project" value="UniProtKB"/>
</dbReference>
<dbReference type="GO" id="GO:0042773">
    <property type="term" value="P:ATP synthesis coupled electron transport"/>
    <property type="evidence" value="ECO:0007669"/>
    <property type="project" value="InterPro"/>
</dbReference>
<dbReference type="FunFam" id="1.10.287.3510:FF:000002">
    <property type="entry name" value="NADH-ubiquinone oxidoreductase chain 4L"/>
    <property type="match status" value="1"/>
</dbReference>
<dbReference type="Gene3D" id="1.10.287.3510">
    <property type="match status" value="1"/>
</dbReference>
<dbReference type="InterPro" id="IPR001133">
    <property type="entry name" value="NADH_UbQ_OxRdtase_chain4L/K"/>
</dbReference>
<dbReference type="InterPro" id="IPR039428">
    <property type="entry name" value="NUOK/Mnh_C1-like"/>
</dbReference>
<dbReference type="PANTHER" id="PTHR11434:SF0">
    <property type="entry name" value="NADH-UBIQUINONE OXIDOREDUCTASE CHAIN 4L"/>
    <property type="match status" value="1"/>
</dbReference>
<dbReference type="PANTHER" id="PTHR11434">
    <property type="entry name" value="NADH-UBIQUINONE OXIDOREDUCTASE SUBUNIT ND4L"/>
    <property type="match status" value="1"/>
</dbReference>
<dbReference type="Pfam" id="PF00420">
    <property type="entry name" value="Oxidored_q2"/>
    <property type="match status" value="1"/>
</dbReference>
<name>NU4LM_MEPME</name>
<proteinExistence type="inferred from homology"/>
<protein>
    <recommendedName>
        <fullName>NADH-ubiquinone oxidoreductase chain 4L</fullName>
        <ecNumber>7.1.1.2</ecNumber>
    </recommendedName>
    <alternativeName>
        <fullName>NADH dehydrogenase subunit 4L</fullName>
    </alternativeName>
</protein>
<gene>
    <name type="primary">MT-ND4L</name>
    <name type="synonym">MTND4L</name>
    <name type="synonym">NADH4L</name>
    <name type="synonym">ND4L</name>
</gene>
<geneLocation type="mitochondrion"/>
<sequence>MSMVYINLFLAFIMSLMGLLVYRSHLMSSLLCLEGMMLSLFIMISITILSNHFTLASMAPIILLVFAACEAALGLSLLVMVSNTYGTDYVQNLNLLQC</sequence>
<reference key="1">
    <citation type="journal article" date="2005" name="Mol. Phylogenet. Evol.">
        <title>A phylogeny of the Caniformia (order Carnivora) based on 12 complete protein-coding mitochondrial genes.</title>
        <authorList>
            <person name="Delisle I."/>
            <person name="Strobeck C."/>
        </authorList>
    </citation>
    <scope>NUCLEOTIDE SEQUENCE [GENOMIC DNA]</scope>
</reference>
<organism>
    <name type="scientific">Mephitis mephitis</name>
    <name type="common">Striped skunk</name>
    <name type="synonym">Viverra mephitis</name>
    <dbReference type="NCBI Taxonomy" id="30548"/>
    <lineage>
        <taxon>Eukaryota</taxon>
        <taxon>Metazoa</taxon>
        <taxon>Chordata</taxon>
        <taxon>Craniata</taxon>
        <taxon>Vertebrata</taxon>
        <taxon>Euteleostomi</taxon>
        <taxon>Mammalia</taxon>
        <taxon>Eutheria</taxon>
        <taxon>Laurasiatheria</taxon>
        <taxon>Carnivora</taxon>
        <taxon>Caniformia</taxon>
        <taxon>Musteloidea</taxon>
        <taxon>Mephitidae</taxon>
        <taxon>Mephitis</taxon>
    </lineage>
</organism>
<feature type="chain" id="PRO_0000256652" description="NADH-ubiquinone oxidoreductase chain 4L">
    <location>
        <begin position="1"/>
        <end position="98"/>
    </location>
</feature>
<feature type="transmembrane region" description="Helical" evidence="3">
    <location>
        <begin position="1"/>
        <end position="21"/>
    </location>
</feature>
<feature type="transmembrane region" description="Helical" evidence="3">
    <location>
        <begin position="29"/>
        <end position="49"/>
    </location>
</feature>
<feature type="transmembrane region" description="Helical" evidence="3">
    <location>
        <begin position="61"/>
        <end position="81"/>
    </location>
</feature>
<accession>Q3L6V0</accession>